<reference key="1">
    <citation type="journal article" date="2004" name="Nat. Genet.">
        <title>Complete sequencing and characterization of 21,243 full-length human cDNAs.</title>
        <authorList>
            <person name="Ota T."/>
            <person name="Suzuki Y."/>
            <person name="Nishikawa T."/>
            <person name="Otsuki T."/>
            <person name="Sugiyama T."/>
            <person name="Irie R."/>
            <person name="Wakamatsu A."/>
            <person name="Hayashi K."/>
            <person name="Sato H."/>
            <person name="Nagai K."/>
            <person name="Kimura K."/>
            <person name="Makita H."/>
            <person name="Sekine M."/>
            <person name="Obayashi M."/>
            <person name="Nishi T."/>
            <person name="Shibahara T."/>
            <person name="Tanaka T."/>
            <person name="Ishii S."/>
            <person name="Yamamoto J."/>
            <person name="Saito K."/>
            <person name="Kawai Y."/>
            <person name="Isono Y."/>
            <person name="Nakamura Y."/>
            <person name="Nagahari K."/>
            <person name="Murakami K."/>
            <person name="Yasuda T."/>
            <person name="Iwayanagi T."/>
            <person name="Wagatsuma M."/>
            <person name="Shiratori A."/>
            <person name="Sudo H."/>
            <person name="Hosoiri T."/>
            <person name="Kaku Y."/>
            <person name="Kodaira H."/>
            <person name="Kondo H."/>
            <person name="Sugawara M."/>
            <person name="Takahashi M."/>
            <person name="Kanda K."/>
            <person name="Yokoi T."/>
            <person name="Furuya T."/>
            <person name="Kikkawa E."/>
            <person name="Omura Y."/>
            <person name="Abe K."/>
            <person name="Kamihara K."/>
            <person name="Katsuta N."/>
            <person name="Sato K."/>
            <person name="Tanikawa M."/>
            <person name="Yamazaki M."/>
            <person name="Ninomiya K."/>
            <person name="Ishibashi T."/>
            <person name="Yamashita H."/>
            <person name="Murakawa K."/>
            <person name="Fujimori K."/>
            <person name="Tanai H."/>
            <person name="Kimata M."/>
            <person name="Watanabe M."/>
            <person name="Hiraoka S."/>
            <person name="Chiba Y."/>
            <person name="Ishida S."/>
            <person name="Ono Y."/>
            <person name="Takiguchi S."/>
            <person name="Watanabe S."/>
            <person name="Yosida M."/>
            <person name="Hotuta T."/>
            <person name="Kusano J."/>
            <person name="Kanehori K."/>
            <person name="Takahashi-Fujii A."/>
            <person name="Hara H."/>
            <person name="Tanase T.-O."/>
            <person name="Nomura Y."/>
            <person name="Togiya S."/>
            <person name="Komai F."/>
            <person name="Hara R."/>
            <person name="Takeuchi K."/>
            <person name="Arita M."/>
            <person name="Imose N."/>
            <person name="Musashino K."/>
            <person name="Yuuki H."/>
            <person name="Oshima A."/>
            <person name="Sasaki N."/>
            <person name="Aotsuka S."/>
            <person name="Yoshikawa Y."/>
            <person name="Matsunawa H."/>
            <person name="Ichihara T."/>
            <person name="Shiohata N."/>
            <person name="Sano S."/>
            <person name="Moriya S."/>
            <person name="Momiyama H."/>
            <person name="Satoh N."/>
            <person name="Takami S."/>
            <person name="Terashima Y."/>
            <person name="Suzuki O."/>
            <person name="Nakagawa S."/>
            <person name="Senoh A."/>
            <person name="Mizoguchi H."/>
            <person name="Goto Y."/>
            <person name="Shimizu F."/>
            <person name="Wakebe H."/>
            <person name="Hishigaki H."/>
            <person name="Watanabe T."/>
            <person name="Sugiyama A."/>
            <person name="Takemoto M."/>
            <person name="Kawakami B."/>
            <person name="Yamazaki M."/>
            <person name="Watanabe K."/>
            <person name="Kumagai A."/>
            <person name="Itakura S."/>
            <person name="Fukuzumi Y."/>
            <person name="Fujimori Y."/>
            <person name="Komiyama M."/>
            <person name="Tashiro H."/>
            <person name="Tanigami A."/>
            <person name="Fujiwara T."/>
            <person name="Ono T."/>
            <person name="Yamada K."/>
            <person name="Fujii Y."/>
            <person name="Ozaki K."/>
            <person name="Hirao M."/>
            <person name="Ohmori Y."/>
            <person name="Kawabata A."/>
            <person name="Hikiji T."/>
            <person name="Kobatake N."/>
            <person name="Inagaki H."/>
            <person name="Ikema Y."/>
            <person name="Okamoto S."/>
            <person name="Okitani R."/>
            <person name="Kawakami T."/>
            <person name="Noguchi S."/>
            <person name="Itoh T."/>
            <person name="Shigeta K."/>
            <person name="Senba T."/>
            <person name="Matsumura K."/>
            <person name="Nakajima Y."/>
            <person name="Mizuno T."/>
            <person name="Morinaga M."/>
            <person name="Sasaki M."/>
            <person name="Togashi T."/>
            <person name="Oyama M."/>
            <person name="Hata H."/>
            <person name="Watanabe M."/>
            <person name="Komatsu T."/>
            <person name="Mizushima-Sugano J."/>
            <person name="Satoh T."/>
            <person name="Shirai Y."/>
            <person name="Takahashi Y."/>
            <person name="Nakagawa K."/>
            <person name="Okumura K."/>
            <person name="Nagase T."/>
            <person name="Nomura N."/>
            <person name="Kikuchi H."/>
            <person name="Masuho Y."/>
            <person name="Yamashita R."/>
            <person name="Nakai K."/>
            <person name="Yada T."/>
            <person name="Nakamura Y."/>
            <person name="Ohara O."/>
            <person name="Isogai T."/>
            <person name="Sugano S."/>
        </authorList>
    </citation>
    <scope>NUCLEOTIDE SEQUENCE [LARGE SCALE MRNA] (ISOFORM 1)</scope>
</reference>
<reference key="2">
    <citation type="submission" date="2005-09" db="EMBL/GenBank/DDBJ databases">
        <authorList>
            <person name="Mural R.J."/>
            <person name="Istrail S."/>
            <person name="Sutton G.G."/>
            <person name="Florea L."/>
            <person name="Halpern A.L."/>
            <person name="Mobarry C.M."/>
            <person name="Lippert R."/>
            <person name="Walenz B."/>
            <person name="Shatkay H."/>
            <person name="Dew I."/>
            <person name="Miller J.R."/>
            <person name="Flanigan M.J."/>
            <person name="Edwards N.J."/>
            <person name="Bolanos R."/>
            <person name="Fasulo D."/>
            <person name="Halldorsson B.V."/>
            <person name="Hannenhalli S."/>
            <person name="Turner R."/>
            <person name="Yooseph S."/>
            <person name="Lu F."/>
            <person name="Nusskern D.R."/>
            <person name="Shue B.C."/>
            <person name="Zheng X.H."/>
            <person name="Zhong F."/>
            <person name="Delcher A.L."/>
            <person name="Huson D.H."/>
            <person name="Kravitz S.A."/>
            <person name="Mouchard L."/>
            <person name="Reinert K."/>
            <person name="Remington K.A."/>
            <person name="Clark A.G."/>
            <person name="Waterman M.S."/>
            <person name="Eichler E.E."/>
            <person name="Adams M.D."/>
            <person name="Hunkapiller M.W."/>
            <person name="Myers E.W."/>
            <person name="Venter J.C."/>
        </authorList>
    </citation>
    <scope>NUCLEOTIDE SEQUENCE [LARGE SCALE GENOMIC DNA]</scope>
</reference>
<reference key="3">
    <citation type="journal article" date="2004" name="Genome Res.">
        <title>The status, quality, and expansion of the NIH full-length cDNA project: the Mammalian Gene Collection (MGC).</title>
        <authorList>
            <consortium name="The MGC Project Team"/>
        </authorList>
    </citation>
    <scope>NUCLEOTIDE SEQUENCE [LARGE SCALE MRNA] (ISOFORMS 1 AND 2)</scope>
    <source>
        <tissue>Uterus</tissue>
    </source>
</reference>
<reference key="4">
    <citation type="journal article" date="2012" name="J. Biomed. Sci.">
        <title>Identification and characterization of a novel gene, c1orf109, encoding a CK2 substrate that is involved in cancer cell proliferation.</title>
        <authorList>
            <person name="Liu S.S."/>
            <person name="Zheng H.X."/>
            <person name="Jiang H.D."/>
            <person name="He J."/>
            <person name="Yu Y."/>
            <person name="Qu Y.P."/>
            <person name="Yue L."/>
            <person name="Zhang Y."/>
            <person name="Li Y."/>
        </authorList>
    </citation>
    <scope>SUBCELLULAR LOCATION</scope>
    <scope>MUTAGENESIS OF SER-104; SER-134 AND SER-182</scope>
    <scope>PHOSPHORYLATION BY CK2</scope>
</reference>
<reference key="5">
    <citation type="journal article" date="2022" name="Cell Rep.">
        <title>Labeling of heterochronic ribosomes reveals C1ORF109 and SPATA5 control a late step in human ribosome assembly.</title>
        <authorList>
            <person name="Ni C."/>
            <person name="Schmitz D.A."/>
            <person name="Lee J."/>
            <person name="Pawlowski K."/>
            <person name="Wu J."/>
            <person name="Buszczak M."/>
        </authorList>
    </citation>
    <scope>FUNCTION</scope>
    <scope>INTERACTION WITH AFG2A; AFG2B AND CINP</scope>
</reference>
<reference key="6">
    <citation type="journal article" date="2024" name="Cell">
        <title>The SPATA5-SPATA5L1 ATPase complex directs replisome proteostasis to ensure genome integrity.</title>
        <authorList>
            <person name="Krishnamoorthy V."/>
            <person name="Foglizzo M."/>
            <person name="Dilley R.L."/>
            <person name="Wu A."/>
            <person name="Datta A."/>
            <person name="Dutta P."/>
            <person name="Campbell L.J."/>
            <person name="Degtjarik O."/>
            <person name="Musgrove L.J."/>
            <person name="Calabrese A.N."/>
            <person name="Zeqiraj E."/>
            <person name="Greenberg R.A."/>
        </authorList>
    </citation>
    <scope>FUNCTION</scope>
    <scope>SUBUNIT</scope>
    <scope>MUTAGENESIS OF LEU-63; LEU-69 AND LEU-73</scope>
</reference>
<organism>
    <name type="scientific">Homo sapiens</name>
    <name type="common">Human</name>
    <dbReference type="NCBI Taxonomy" id="9606"/>
    <lineage>
        <taxon>Eukaryota</taxon>
        <taxon>Metazoa</taxon>
        <taxon>Chordata</taxon>
        <taxon>Craniata</taxon>
        <taxon>Vertebrata</taxon>
        <taxon>Euteleostomi</taxon>
        <taxon>Mammalia</taxon>
        <taxon>Eutheria</taxon>
        <taxon>Euarchontoglires</taxon>
        <taxon>Primates</taxon>
        <taxon>Haplorrhini</taxon>
        <taxon>Catarrhini</taxon>
        <taxon>Hominidae</taxon>
        <taxon>Homo</taxon>
    </lineage>
</organism>
<dbReference type="EMBL" id="AK000515">
    <property type="protein sequence ID" value="BAA91221.1"/>
    <property type="molecule type" value="mRNA"/>
</dbReference>
<dbReference type="EMBL" id="CH471059">
    <property type="protein sequence ID" value="EAX07327.1"/>
    <property type="molecule type" value="Genomic_DNA"/>
</dbReference>
<dbReference type="EMBL" id="CH471059">
    <property type="protein sequence ID" value="EAX07329.1"/>
    <property type="molecule type" value="Genomic_DNA"/>
</dbReference>
<dbReference type="EMBL" id="CH471059">
    <property type="protein sequence ID" value="EAX07330.1"/>
    <property type="molecule type" value="Genomic_DNA"/>
</dbReference>
<dbReference type="EMBL" id="BC018109">
    <property type="protein sequence ID" value="AAH18109.1"/>
    <property type="molecule type" value="mRNA"/>
</dbReference>
<dbReference type="EMBL" id="BC063843">
    <property type="protein sequence ID" value="AAH63843.1"/>
    <property type="molecule type" value="mRNA"/>
</dbReference>
<dbReference type="CCDS" id="CCDS423.1">
    <molecule id="Q9NX04-1"/>
</dbReference>
<dbReference type="RefSeq" id="NP_001289959.1">
    <property type="nucleotide sequence ID" value="NM_001303030.1"/>
</dbReference>
<dbReference type="RefSeq" id="NP_001289960.1">
    <property type="nucleotide sequence ID" value="NM_001303031.1"/>
</dbReference>
<dbReference type="RefSeq" id="NP_001337694.1">
    <molecule id="Q9NX04-1"/>
    <property type="nucleotide sequence ID" value="NM_001350765.2"/>
</dbReference>
<dbReference type="RefSeq" id="NP_001337695.1">
    <molecule id="Q9NX04-1"/>
    <property type="nucleotide sequence ID" value="NM_001350766.2"/>
</dbReference>
<dbReference type="RefSeq" id="NP_001337696.1">
    <molecule id="Q9NX04-1"/>
    <property type="nucleotide sequence ID" value="NM_001350767.2"/>
</dbReference>
<dbReference type="RefSeq" id="NP_001337697.1">
    <molecule id="Q9NX04-1"/>
    <property type="nucleotide sequence ID" value="NM_001350768.2"/>
</dbReference>
<dbReference type="RefSeq" id="NP_001337698.1">
    <molecule id="Q9NX04-1"/>
    <property type="nucleotide sequence ID" value="NM_001350769.2"/>
</dbReference>
<dbReference type="RefSeq" id="NP_001337699.1">
    <molecule id="Q9NX04-1"/>
    <property type="nucleotide sequence ID" value="NM_001350770.2"/>
</dbReference>
<dbReference type="RefSeq" id="NP_001337700.1">
    <molecule id="Q9NX04-1"/>
    <property type="nucleotide sequence ID" value="NM_001350771.2"/>
</dbReference>
<dbReference type="RefSeq" id="NP_060320.1">
    <molecule id="Q9NX04-1"/>
    <property type="nucleotide sequence ID" value="NM_017850.3"/>
</dbReference>
<dbReference type="RefSeq" id="XP_016857035.1">
    <property type="nucleotide sequence ID" value="XM_017001546.1"/>
</dbReference>
<dbReference type="RefSeq" id="XP_016857036.1">
    <property type="nucleotide sequence ID" value="XM_017001547.1"/>
</dbReference>
<dbReference type="RefSeq" id="XP_016857040.1">
    <property type="nucleotide sequence ID" value="XM_017001551.1"/>
</dbReference>
<dbReference type="RefSeq" id="XP_016857041.1">
    <property type="nucleotide sequence ID" value="XM_017001552.1"/>
</dbReference>
<dbReference type="RefSeq" id="XP_016857042.1">
    <property type="nucleotide sequence ID" value="XM_017001553.1"/>
</dbReference>
<dbReference type="RefSeq" id="XP_016857043.1">
    <property type="nucleotide sequence ID" value="XM_017001554.1"/>
</dbReference>
<dbReference type="RefSeq" id="XP_016857044.1">
    <property type="nucleotide sequence ID" value="XM_017001555.1"/>
</dbReference>
<dbReference type="RefSeq" id="XP_016857045.1">
    <property type="nucleotide sequence ID" value="XM_017001556.1"/>
</dbReference>
<dbReference type="PDB" id="8RHN">
    <property type="method" value="EM"/>
    <property type="resolution" value="4.50 A"/>
    <property type="chains" value="A/B=1-203"/>
</dbReference>
<dbReference type="PDBsum" id="8RHN"/>
<dbReference type="SMR" id="Q9NX04"/>
<dbReference type="BioGRID" id="120293">
    <property type="interactions" value="159"/>
</dbReference>
<dbReference type="ComplexPortal" id="CPX-9182">
    <property type="entry name" value="SPATA5-SPATA5L1 ATPase complex"/>
</dbReference>
<dbReference type="FunCoup" id="Q9NX04">
    <property type="interactions" value="3726"/>
</dbReference>
<dbReference type="IntAct" id="Q9NX04">
    <property type="interactions" value="187"/>
</dbReference>
<dbReference type="MINT" id="Q9NX04"/>
<dbReference type="STRING" id="9606.ENSP00000350704"/>
<dbReference type="iPTMnet" id="Q9NX04"/>
<dbReference type="PhosphoSitePlus" id="Q9NX04"/>
<dbReference type="BioMuta" id="C1orf109"/>
<dbReference type="DMDM" id="74761780"/>
<dbReference type="jPOST" id="Q9NX04"/>
<dbReference type="MassIVE" id="Q9NX04"/>
<dbReference type="PaxDb" id="9606-ENSP00000350704"/>
<dbReference type="PeptideAtlas" id="Q9NX04"/>
<dbReference type="ProteomicsDB" id="83013">
    <molecule id="Q9NX04-1"/>
</dbReference>
<dbReference type="ProteomicsDB" id="83014">
    <molecule id="Q9NX04-2"/>
</dbReference>
<dbReference type="Pumba" id="Q9NX04"/>
<dbReference type="Antibodypedia" id="17567">
    <property type="antibodies" value="49 antibodies from 8 providers"/>
</dbReference>
<dbReference type="DNASU" id="54955"/>
<dbReference type="Ensembl" id="ENST00000358011.8">
    <molecule id="Q9NX04-1"/>
    <property type="protein sequence ID" value="ENSP00000350704.4"/>
    <property type="gene ID" value="ENSG00000116922.15"/>
</dbReference>
<dbReference type="Ensembl" id="ENST00000464085.5">
    <molecule id="Q9NX04-1"/>
    <property type="protein sequence ID" value="ENSP00000477159.1"/>
    <property type="gene ID" value="ENSG00000116922.15"/>
</dbReference>
<dbReference type="Ensembl" id="ENST00000486637.2">
    <molecule id="Q9NX04-1"/>
    <property type="protein sequence ID" value="ENSP00000476779.2"/>
    <property type="gene ID" value="ENSG00000116922.15"/>
</dbReference>
<dbReference type="Ensembl" id="ENST00000494120.1">
    <molecule id="Q9NX04-2"/>
    <property type="protein sequence ID" value="ENSP00000477273.1"/>
    <property type="gene ID" value="ENSG00000116922.15"/>
</dbReference>
<dbReference type="GeneID" id="54955"/>
<dbReference type="KEGG" id="hsa:54955"/>
<dbReference type="MANE-Select" id="ENST00000486637.2">
    <property type="protein sequence ID" value="ENSP00000476779.2"/>
    <property type="RefSeq nucleotide sequence ID" value="NM_001350770.2"/>
    <property type="RefSeq protein sequence ID" value="NP_001337699.1"/>
</dbReference>
<dbReference type="UCSC" id="uc001cbn.4">
    <molecule id="Q9NX04-1"/>
    <property type="organism name" value="human"/>
</dbReference>
<dbReference type="AGR" id="HGNC:26039"/>
<dbReference type="CTD" id="54955"/>
<dbReference type="DisGeNET" id="54955"/>
<dbReference type="GeneCards" id="AIRIM"/>
<dbReference type="HGNC" id="HGNC:26039">
    <property type="gene designation" value="AIRIM"/>
</dbReference>
<dbReference type="HPA" id="ENSG00000116922">
    <property type="expression patterns" value="Low tissue specificity"/>
</dbReference>
<dbReference type="MIM" id="614799">
    <property type="type" value="gene"/>
</dbReference>
<dbReference type="neXtProt" id="NX_Q9NX04"/>
<dbReference type="OpenTargets" id="ENSG00000116922"/>
<dbReference type="PharmGKB" id="PA142672493"/>
<dbReference type="VEuPathDB" id="HostDB:ENSG00000116922"/>
<dbReference type="eggNOG" id="ENOG502S0VU">
    <property type="taxonomic scope" value="Eukaryota"/>
</dbReference>
<dbReference type="GeneTree" id="ENSGT00390000008551"/>
<dbReference type="HOGENOM" id="CLU_111850_0_0_1"/>
<dbReference type="InParanoid" id="Q9NX04"/>
<dbReference type="OMA" id="SHVEQVF"/>
<dbReference type="OrthoDB" id="6605214at2759"/>
<dbReference type="PAN-GO" id="Q9NX04">
    <property type="GO annotations" value="2 GO annotations based on evolutionary models"/>
</dbReference>
<dbReference type="PhylomeDB" id="Q9NX04"/>
<dbReference type="TreeFam" id="TF332524"/>
<dbReference type="PathwayCommons" id="Q9NX04"/>
<dbReference type="SignaLink" id="Q9NX04"/>
<dbReference type="BioGRID-ORCS" id="54955">
    <property type="hits" value="623 hits in 1136 CRISPR screens"/>
</dbReference>
<dbReference type="ChiTaRS" id="C1orf109">
    <property type="organism name" value="human"/>
</dbReference>
<dbReference type="GeneWiki" id="C1orf109_(gene)"/>
<dbReference type="GenomeRNAi" id="54955"/>
<dbReference type="Pharos" id="Q9NX04">
    <property type="development level" value="Tdark"/>
</dbReference>
<dbReference type="PRO" id="PR:Q9NX04"/>
<dbReference type="Proteomes" id="UP000005640">
    <property type="component" value="Chromosome 1"/>
</dbReference>
<dbReference type="RNAct" id="Q9NX04">
    <property type="molecule type" value="protein"/>
</dbReference>
<dbReference type="Bgee" id="ENSG00000116922">
    <property type="expression patterns" value="Expressed in ventricular zone and 182 other cell types or tissues"/>
</dbReference>
<dbReference type="ExpressionAtlas" id="Q9NX04">
    <property type="expression patterns" value="baseline and differential"/>
</dbReference>
<dbReference type="GO" id="GO:0005737">
    <property type="term" value="C:cytoplasm"/>
    <property type="evidence" value="ECO:0000314"/>
    <property type="project" value="UniProtKB"/>
</dbReference>
<dbReference type="GO" id="GO:0005829">
    <property type="term" value="C:cytosol"/>
    <property type="evidence" value="ECO:0000314"/>
    <property type="project" value="HPA"/>
</dbReference>
<dbReference type="GO" id="GO:0005730">
    <property type="term" value="C:nucleolus"/>
    <property type="evidence" value="ECO:0000314"/>
    <property type="project" value="HPA"/>
</dbReference>
<dbReference type="GO" id="GO:0005654">
    <property type="term" value="C:nucleoplasm"/>
    <property type="evidence" value="ECO:0000314"/>
    <property type="project" value="HPA"/>
</dbReference>
<dbReference type="GO" id="GO:0005634">
    <property type="term" value="C:nucleus"/>
    <property type="evidence" value="ECO:0000314"/>
    <property type="project" value="UniProtKB"/>
</dbReference>
<dbReference type="GO" id="GO:0042273">
    <property type="term" value="P:ribosomal large subunit biogenesis"/>
    <property type="evidence" value="ECO:0000314"/>
    <property type="project" value="UniProtKB"/>
</dbReference>
<dbReference type="InterPro" id="IPR029159">
    <property type="entry name" value="CA109-like"/>
</dbReference>
<dbReference type="PANTHER" id="PTHR16234:SF5">
    <property type="entry name" value="AFG2-INTERACTING RIBOSOME MATURATION FACTOR"/>
    <property type="match status" value="1"/>
</dbReference>
<dbReference type="PANTHER" id="PTHR16234">
    <property type="entry name" value="SIMILAR TO HYPOTHETICAL PROTEIN FLJ20508"/>
    <property type="match status" value="1"/>
</dbReference>
<dbReference type="Pfam" id="PF15011">
    <property type="entry name" value="CA109-like"/>
    <property type="match status" value="1"/>
</dbReference>
<comment type="function">
    <text evidence="2 3">Part of the 55LCC heterohexameric ATPase complex which is chromatin-associated and promotes replisome proteostasis to maintain replication fork progression and genome stability. Required for replication fork progression, sister chromatid cohesion, and chromosome stability. The ATPase activity is specifically enhanced by replication fork DNA and is coupled to cysteine protease-dependent cleavage of replisome substrates in response to replication fork damage. Uses ATPase activity to process replisome substrates in S-phase, facilitating their proteolytic turnover from chromatin to ensure DNA replication and mitotic fidelity (PubMed:38554706). Involved in the cytoplasmic maturation steps of pre-60S ribosomal particles by promoting the release of shuttling protein RSL24D1/RLP24 from the pre-ribosomal particles (PubMed:35354024).</text>
</comment>
<comment type="subunit">
    <text evidence="2 3">Part of the 55LCC heterohexameric ATPase complex composed at least of AIRIM, AFG2A, AFG2B and CINP (PubMed:35354024, PubMed:38554706). Does not associate with pre-60S ribosomal particles (PubMed:35354024).</text>
</comment>
<comment type="interaction">
    <interactant intactId="EBI-8643161">
        <id>Q9NX04</id>
    </interactant>
    <interactant intactId="EBI-11096309">
        <id>Q9NYB9-2</id>
        <label>ABI2</label>
    </interactant>
    <organismsDiffer>false</organismsDiffer>
    <experiments>3</experiments>
</comment>
<comment type="interaction">
    <interactant intactId="EBI-8643161">
        <id>Q9NX04</id>
    </interactant>
    <interactant intactId="EBI-9089447">
        <id>Q96D30</id>
        <label>ADD1</label>
    </interactant>
    <organismsDiffer>false</organismsDiffer>
    <experiments>5</experiments>
</comment>
<comment type="interaction">
    <interactant intactId="EBI-8643161">
        <id>Q9NX04</id>
    </interactant>
    <interactant intactId="EBI-713602">
        <id>Q9BQD7</id>
        <label>ANTKMT</label>
    </interactant>
    <organismsDiffer>false</organismsDiffer>
    <experiments>3</experiments>
</comment>
<comment type="interaction">
    <interactant intactId="EBI-8643161">
        <id>Q9NX04</id>
    </interactant>
    <interactant intactId="EBI-12811889">
        <id>Q9Y6H3</id>
        <label>ATP23</label>
    </interactant>
    <organismsDiffer>false</organismsDiffer>
    <experiments>3</experiments>
</comment>
<comment type="interaction">
    <interactant intactId="EBI-8643161">
        <id>Q9NX04</id>
    </interactant>
    <interactant intactId="EBI-8640233">
        <id>Q5T686</id>
        <label>AVPI1</label>
    </interactant>
    <organismsDiffer>false</organismsDiffer>
    <experiments>3</experiments>
</comment>
<comment type="interaction">
    <interactant intactId="EBI-8643161">
        <id>Q9NX04</id>
    </interactant>
    <interactant intactId="EBI-10193358">
        <id>Q96GS4</id>
        <label>BORCS6</label>
    </interactant>
    <organismsDiffer>false</organismsDiffer>
    <experiments>3</experiments>
</comment>
<comment type="interaction">
    <interactant intactId="EBI-8643161">
        <id>Q9NX04</id>
    </interactant>
    <interactant intactId="EBI-946029">
        <id>Q6P1W5</id>
        <label>C1orf94</label>
    </interactant>
    <organismsDiffer>false</organismsDiffer>
    <experiments>3</experiments>
</comment>
<comment type="interaction">
    <interactant intactId="EBI-8643161">
        <id>Q9NX04</id>
    </interactant>
    <interactant intactId="EBI-2817707">
        <id>Q9BXJ5</id>
        <label>C1QTNF2</label>
    </interactant>
    <organismsDiffer>false</organismsDiffer>
    <experiments>3</experiments>
</comment>
<comment type="interaction">
    <interactant intactId="EBI-8643161">
        <id>Q9NX04</id>
    </interactant>
    <interactant intactId="EBI-741724">
        <id>Q8NA61</id>
        <label>CBY2</label>
    </interactant>
    <organismsDiffer>false</organismsDiffer>
    <experiments>3</experiments>
</comment>
<comment type="interaction">
    <interactant intactId="EBI-8643161">
        <id>Q9NX04</id>
    </interactant>
    <interactant intactId="EBI-11524851">
        <id>Q8NA61-2</id>
        <label>CBY2</label>
    </interactant>
    <organismsDiffer>false</organismsDiffer>
    <experiments>3</experiments>
</comment>
<comment type="interaction">
    <interactant intactId="EBI-8643161">
        <id>Q9NX04</id>
    </interactant>
    <interactant intactId="EBI-744556">
        <id>Q96HB5</id>
        <label>CCDC120</label>
    </interactant>
    <organismsDiffer>false</organismsDiffer>
    <experiments>3</experiments>
</comment>
<comment type="interaction">
    <interactant intactId="EBI-8643161">
        <id>Q9NX04</id>
    </interactant>
    <interactant intactId="EBI-11977221">
        <id>Q86Z20</id>
        <label>CCDC125</label>
    </interactant>
    <organismsDiffer>false</organismsDiffer>
    <experiments>3</experiments>
</comment>
<comment type="interaction">
    <interactant intactId="EBI-8643161">
        <id>Q9NX04</id>
    </interactant>
    <interactant intactId="EBI-347573">
        <id>A6NC98</id>
        <label>CCDC88B</label>
    </interactant>
    <organismsDiffer>false</organismsDiffer>
    <experiments>3</experiments>
</comment>
<comment type="interaction">
    <interactant intactId="EBI-8643161">
        <id>Q9NX04</id>
    </interactant>
    <interactant intactId="EBI-10175300">
        <id>Q8TD31-3</id>
        <label>CCHCR1</label>
    </interactant>
    <organismsDiffer>false</organismsDiffer>
    <experiments>3</experiments>
</comment>
<comment type="interaction">
    <interactant intactId="EBI-8643161">
        <id>Q9NX04</id>
    </interactant>
    <interactant intactId="EBI-1773949">
        <id>Q9BXL8</id>
        <label>CDCA4</label>
    </interactant>
    <organismsDiffer>false</organismsDiffer>
    <experiments>3</experiments>
</comment>
<comment type="interaction">
    <interactant intactId="EBI-8643161">
        <id>Q9NX04</id>
    </interactant>
    <interactant intactId="EBI-747776">
        <id>Q53EZ4</id>
        <label>CEP55</label>
    </interactant>
    <organismsDiffer>false</organismsDiffer>
    <experiments>6</experiments>
</comment>
<comment type="interaction">
    <interactant intactId="EBI-8643161">
        <id>Q9NX04</id>
    </interactant>
    <interactant intactId="EBI-739784">
        <id>Q9BW66</id>
        <label>CINP</label>
    </interactant>
    <organismsDiffer>false</organismsDiffer>
    <experiments>14</experiments>
</comment>
<comment type="interaction">
    <interactant intactId="EBI-8643161">
        <id>Q9NX04</id>
    </interactant>
    <interactant intactId="EBI-748171">
        <id>O43186</id>
        <label>CRX</label>
    </interactant>
    <organismsDiffer>false</organismsDiffer>
    <experiments>3</experiments>
</comment>
<comment type="interaction">
    <interactant intactId="EBI-8643161">
        <id>Q9NX04</id>
    </interactant>
    <interactant intactId="EBI-6873363">
        <id>Q8WUE5</id>
        <label>CT55</label>
    </interactant>
    <organismsDiffer>false</organismsDiffer>
    <experiments>3</experiments>
</comment>
<comment type="interaction">
    <interactant intactId="EBI-8643161">
        <id>Q9NX04</id>
    </interactant>
    <interactant intactId="EBI-1188472">
        <id>P78358</id>
        <label>CTAG1B</label>
    </interactant>
    <organismsDiffer>false</organismsDiffer>
    <experiments>3</experiments>
</comment>
<comment type="interaction">
    <interactant intactId="EBI-8643161">
        <id>Q9NX04</id>
    </interactant>
    <interactant intactId="EBI-11988027">
        <id>Q9NRI5-2</id>
        <label>DISC1</label>
    </interactant>
    <organismsDiffer>false</organismsDiffer>
    <experiments>3</experiments>
</comment>
<comment type="interaction">
    <interactant intactId="EBI-8643161">
        <id>Q9NX04</id>
    </interactant>
    <interactant intactId="EBI-947964">
        <id>Q16610</id>
        <label>ECM1</label>
    </interactant>
    <organismsDiffer>false</organismsDiffer>
    <experiments>3</experiments>
</comment>
<comment type="interaction">
    <interactant intactId="EBI-8643161">
        <id>Q9NX04</id>
    </interactant>
    <interactant intactId="EBI-712452">
        <id>Q9BQ95</id>
        <label>ECSIT</label>
    </interactant>
    <organismsDiffer>false</organismsDiffer>
    <experiments>3</experiments>
</comment>
<comment type="interaction">
    <interactant intactId="EBI-8643161">
        <id>Q9NX04</id>
    </interactant>
    <interactant intactId="EBI-19153639">
        <id>Q9NTX9</id>
        <label>FAM217B</label>
    </interactant>
    <organismsDiffer>false</organismsDiffer>
    <experiments>3</experiments>
</comment>
<comment type="interaction">
    <interactant intactId="EBI-8643161">
        <id>Q9NX04</id>
    </interactant>
    <interactant intactId="EBI-10220102">
        <id>B7ZLH0</id>
        <label>FAM22F</label>
    </interactant>
    <organismsDiffer>false</organismsDiffer>
    <experiments>3</experiments>
</comment>
<comment type="interaction">
    <interactant intactId="EBI-8643161">
        <id>Q9NX04</id>
    </interactant>
    <interactant intactId="EBI-12845222">
        <id>Q9NVL1-2</id>
        <label>FAM86C1P</label>
    </interactant>
    <organismsDiffer>false</organismsDiffer>
    <experiments>3</experiments>
</comment>
<comment type="interaction">
    <interactant intactId="EBI-8643161">
        <id>Q9NX04</id>
    </interactant>
    <interactant intactId="EBI-18138793">
        <id>Q9C0B1-2</id>
        <label>FTO</label>
    </interactant>
    <organismsDiffer>false</organismsDiffer>
    <experiments>3</experiments>
</comment>
<comment type="interaction">
    <interactant intactId="EBI-8643161">
        <id>Q9NX04</id>
    </interactant>
    <interactant intactId="EBI-711823">
        <id>Q7L5D6</id>
        <label>GET4</label>
    </interactant>
    <organismsDiffer>false</organismsDiffer>
    <experiments>3</experiments>
</comment>
<comment type="interaction">
    <interactant intactId="EBI-8643161">
        <id>Q9NX04</id>
    </interactant>
    <interactant intactId="EBI-947774">
        <id>O75420</id>
        <label>GIGYF1</label>
    </interactant>
    <organismsDiffer>false</organismsDiffer>
    <experiments>3</experiments>
</comment>
<comment type="interaction">
    <interactant intactId="EBI-8643161">
        <id>Q9NX04</id>
    </interactant>
    <interactant intactId="EBI-618309">
        <id>Q08379</id>
        <label>GOLGA2</label>
    </interactant>
    <organismsDiffer>false</organismsDiffer>
    <experiments>3</experiments>
</comment>
<comment type="interaction">
    <interactant intactId="EBI-8643161">
        <id>Q9NX04</id>
    </interactant>
    <interactant intactId="EBI-11163335">
        <id>Q9NYA3</id>
        <label>GOLGA6A</label>
    </interactant>
    <organismsDiffer>false</organismsDiffer>
    <experiments>3</experiments>
</comment>
<comment type="interaction">
    <interactant intactId="EBI-8643161">
        <id>Q9NX04</id>
    </interactant>
    <interactant intactId="EBI-5916454">
        <id>A6NEM1</id>
        <label>GOLGA6L9</label>
    </interactant>
    <organismsDiffer>false</organismsDiffer>
    <experiments>3</experiments>
</comment>
<comment type="interaction">
    <interactant intactId="EBI-8643161">
        <id>Q9NX04</id>
    </interactant>
    <interactant intactId="EBI-8470369">
        <id>Q9UBX0</id>
        <label>HESX1</label>
    </interactant>
    <organismsDiffer>false</organismsDiffer>
    <experiments>3</experiments>
</comment>
<comment type="interaction">
    <interactant intactId="EBI-8643161">
        <id>Q9NX04</id>
    </interactant>
    <interactant intactId="EBI-10961706">
        <id>Q96ED9-2</id>
        <label>HOOK2</label>
    </interactant>
    <organismsDiffer>false</organismsDiffer>
    <experiments>3</experiments>
</comment>
<comment type="interaction">
    <interactant intactId="EBI-8643161">
        <id>Q9NX04</id>
    </interactant>
    <interactant intactId="EBI-1752118">
        <id>P31273</id>
        <label>HOXC8</label>
    </interactant>
    <organismsDiffer>false</organismsDiffer>
    <experiments>3</experiments>
</comment>
<comment type="interaction">
    <interactant intactId="EBI-8643161">
        <id>Q9NX04</id>
    </interactant>
    <interactant intactId="EBI-8638439">
        <id>Q8IYA8</id>
        <label>IHO1</label>
    </interactant>
    <organismsDiffer>false</organismsDiffer>
    <experiments>6</experiments>
</comment>
<comment type="interaction">
    <interactant intactId="EBI-8643161">
        <id>Q9NX04</id>
    </interactant>
    <interactant intactId="EBI-745305">
        <id>Q13422</id>
        <label>IKZF1</label>
    </interactant>
    <organismsDiffer>false</organismsDiffer>
    <experiments>3</experiments>
</comment>
<comment type="interaction">
    <interactant intactId="EBI-8643161">
        <id>Q9NX04</id>
    </interactant>
    <interactant intactId="EBI-11522367">
        <id>Q13422-7</id>
        <label>IKZF1</label>
    </interactant>
    <organismsDiffer>false</organismsDiffer>
    <experiments>3</experiments>
</comment>
<comment type="interaction">
    <interactant intactId="EBI-8643161">
        <id>Q9NX04</id>
    </interactant>
    <interactant intactId="EBI-747204">
        <id>Q9UKT9</id>
        <label>IKZF3</label>
    </interactant>
    <organismsDiffer>false</organismsDiffer>
    <experiments>6</experiments>
</comment>
<comment type="interaction">
    <interactant intactId="EBI-8643161">
        <id>Q9NX04</id>
    </interactant>
    <interactant intactId="EBI-10285157">
        <id>Q96EL1</id>
        <label>INKA1</label>
    </interactant>
    <organismsDiffer>false</organismsDiffer>
    <experiments>3</experiments>
</comment>
<comment type="interaction">
    <interactant intactId="EBI-8643161">
        <id>Q9NX04</id>
    </interactant>
    <interactant intactId="EBI-743591">
        <id>Q9BW62</id>
        <label>KATNAL1</label>
    </interactant>
    <organismsDiffer>false</organismsDiffer>
    <experiments>6</experiments>
</comment>
<comment type="interaction">
    <interactant intactId="EBI-8643161">
        <id>Q9NX04</id>
    </interactant>
    <interactant intactId="EBI-2805604">
        <id>Q2KHM9</id>
        <label>KIAA0753</label>
    </interactant>
    <organismsDiffer>false</organismsDiffer>
    <experiments>3</experiments>
</comment>
<comment type="interaction">
    <interactant intactId="EBI-8643161">
        <id>Q9NX04</id>
    </interactant>
    <interactant intactId="EBI-2125614">
        <id>Q9BVG8</id>
        <label>KIFC3</label>
    </interactant>
    <organismsDiffer>false</organismsDiffer>
    <experiments>4</experiments>
</comment>
<comment type="interaction">
    <interactant intactId="EBI-8643161">
        <id>Q9NX04</id>
    </interactant>
    <interactant intactId="EBI-14069005">
        <id>Q9BVG8-5</id>
        <label>KIFC3</label>
    </interactant>
    <organismsDiffer>false</organismsDiffer>
    <experiments>3</experiments>
</comment>
<comment type="interaction">
    <interactant intactId="EBI-8643161">
        <id>Q9NX04</id>
    </interactant>
    <interactant intactId="EBI-2796400">
        <id>Q9UIH9</id>
        <label>KLF15</label>
    </interactant>
    <organismsDiffer>false</organismsDiffer>
    <experiments>3</experiments>
</comment>
<comment type="interaction">
    <interactant intactId="EBI-8643161">
        <id>Q9NX04</id>
    </interactant>
    <interactant intactId="EBI-10171552">
        <id>A1A4E9</id>
        <label>KRT13</label>
    </interactant>
    <organismsDiffer>false</organismsDiffer>
    <experiments>3</experiments>
</comment>
<comment type="interaction">
    <interactant intactId="EBI-8643161">
        <id>Q9NX04</id>
    </interactant>
    <interactant intactId="EBI-356410">
        <id>P08779</id>
        <label>KRT16</label>
    </interactant>
    <organismsDiffer>false</organismsDiffer>
    <experiments>3</experiments>
</comment>
<comment type="interaction">
    <interactant intactId="EBI-8643161">
        <id>Q9NX04</id>
    </interactant>
    <interactant intactId="EBI-297888">
        <id>P05783</id>
        <label>KRT18</label>
    </interactant>
    <organismsDiffer>false</organismsDiffer>
    <experiments>3</experiments>
</comment>
<comment type="interaction">
    <interactant intactId="EBI-8643161">
        <id>Q9NX04</id>
    </interactant>
    <interactant intactId="EBI-742756">
        <id>P08727</id>
        <label>KRT19</label>
    </interactant>
    <organismsDiffer>false</organismsDiffer>
    <experiments>6</experiments>
</comment>
<comment type="interaction">
    <interactant intactId="EBI-8643161">
        <id>Q9NX04</id>
    </interactant>
    <interactant intactId="EBI-2952736">
        <id>Q2M2I5</id>
        <label>KRT24</label>
    </interactant>
    <organismsDiffer>false</organismsDiffer>
    <experiments>3</experiments>
</comment>
<comment type="interaction">
    <interactant intactId="EBI-8643161">
        <id>Q9NX04</id>
    </interactant>
    <interactant intactId="EBI-948001">
        <id>Q15323</id>
        <label>KRT31</label>
    </interactant>
    <organismsDiffer>false</organismsDiffer>
    <experiments>6</experiments>
</comment>
<comment type="interaction">
    <interactant intactId="EBI-8643161">
        <id>Q9NX04</id>
    </interactant>
    <interactant intactId="EBI-1058674">
        <id>Q92764</id>
        <label>KRT35</label>
    </interactant>
    <organismsDiffer>false</organismsDiffer>
    <experiments>3</experiments>
</comment>
<comment type="interaction">
    <interactant intactId="EBI-8643161">
        <id>Q9NX04</id>
    </interactant>
    <interactant intactId="EBI-10171697">
        <id>Q6A162</id>
        <label>KRT40</label>
    </interactant>
    <organismsDiffer>false</organismsDiffer>
    <experiments>3</experiments>
</comment>
<comment type="interaction">
    <interactant intactId="EBI-8643161">
        <id>Q9NX04</id>
    </interactant>
    <interactant intactId="EBI-2949715">
        <id>O95678</id>
        <label>KRT75</label>
    </interactant>
    <organismsDiffer>false</organismsDiffer>
    <experiments>3</experiments>
</comment>
<comment type="interaction">
    <interactant intactId="EBI-8643161">
        <id>Q9NX04</id>
    </interactant>
    <interactant intactId="EBI-2952745">
        <id>Q01546</id>
        <label>KRT76</label>
    </interactant>
    <organismsDiffer>false</organismsDiffer>
    <experiments>3</experiments>
</comment>
<comment type="interaction">
    <interactant intactId="EBI-8643161">
        <id>Q9NX04</id>
    </interactant>
    <interactant intactId="EBI-11999246">
        <id>Q6KB66-2</id>
        <label>KRT80</label>
    </interactant>
    <organismsDiffer>false</organismsDiffer>
    <experiments>3</experiments>
</comment>
<comment type="interaction">
    <interactant intactId="EBI-8643161">
        <id>Q9NX04</id>
    </interactant>
    <interactant intactId="EBI-10241252">
        <id>Q3SY46</id>
        <label>KRTAP13-3</label>
    </interactant>
    <organismsDiffer>false</organismsDiffer>
    <experiments>3</experiments>
</comment>
<comment type="interaction">
    <interactant intactId="EBI-8643161">
        <id>Q9NX04</id>
    </interactant>
    <interactant intactId="EBI-740738">
        <id>O95751</id>
        <label>LDOC1</label>
    </interactant>
    <organismsDiffer>false</organismsDiffer>
    <experiments>3</experiments>
</comment>
<comment type="interaction">
    <interactant intactId="EBI-8643161">
        <id>Q9NX04</id>
    </interactant>
    <interactant intactId="EBI-11959475">
        <id>P25791-3</id>
        <label>LMO2</label>
    </interactant>
    <organismsDiffer>false</organismsDiffer>
    <experiments>5</experiments>
</comment>
<comment type="interaction">
    <interactant intactId="EBI-8643161">
        <id>Q9NX04</id>
    </interactant>
    <interactant intactId="EBI-741037">
        <id>Q9BRK4</id>
        <label>LZTS2</label>
    </interactant>
    <organismsDiffer>false</organismsDiffer>
    <experiments>6</experiments>
</comment>
<comment type="interaction">
    <interactant intactId="EBI-8643161">
        <id>Q9NX04</id>
    </interactant>
    <interactant intactId="EBI-12516603">
        <id>Q8WWY6</id>
        <label>MBD3L1</label>
    </interactant>
    <organismsDiffer>false</organismsDiffer>
    <experiments>3</experiments>
</comment>
<comment type="interaction">
    <interactant intactId="EBI-8643161">
        <id>Q9NX04</id>
    </interactant>
    <interactant intactId="EBI-398437">
        <id>O15151</id>
        <label>MDM4</label>
    </interactant>
    <organismsDiffer>false</organismsDiffer>
    <experiments>3</experiments>
</comment>
<comment type="interaction">
    <interactant intactId="EBI-8643161">
        <id>Q9NX04</id>
    </interactant>
    <interactant intactId="EBI-19944212">
        <id>A8MW99</id>
        <label>MEI4</label>
    </interactant>
    <organismsDiffer>false</organismsDiffer>
    <experiments>3</experiments>
</comment>
<comment type="interaction">
    <interactant intactId="EBI-8643161">
        <id>Q9NX04</id>
    </interactant>
    <interactant intactId="EBI-2864512">
        <id>P50221</id>
        <label>MEOX1</label>
    </interactant>
    <organismsDiffer>false</organismsDiffer>
    <experiments>3</experiments>
</comment>
<comment type="interaction">
    <interactant intactId="EBI-8643161">
        <id>Q9NX04</id>
    </interactant>
    <interactant intactId="EBI-748397">
        <id>P50222</id>
        <label>MEOX2</label>
    </interactant>
    <organismsDiffer>false</organismsDiffer>
    <experiments>3</experiments>
</comment>
<comment type="interaction">
    <interactant intactId="EBI-8643161">
        <id>Q9NX04</id>
    </interactant>
    <interactant intactId="EBI-16439278">
        <id>Q6FHY5</id>
        <label>MEOX2</label>
    </interactant>
    <organismsDiffer>false</organismsDiffer>
    <experiments>3</experiments>
</comment>
<comment type="interaction">
    <interactant intactId="EBI-8643161">
        <id>Q9NX04</id>
    </interactant>
    <interactant intactId="EBI-2548751">
        <id>Q8TD10</id>
        <label>MIPOL1</label>
    </interactant>
    <organismsDiffer>false</organismsDiffer>
    <experiments>3</experiments>
</comment>
<comment type="interaction">
    <interactant intactId="EBI-8643161">
        <id>Q9NX04</id>
    </interactant>
    <interactant intactId="EBI-2341005">
        <id>Q9H000</id>
        <label>MKRN2</label>
    </interactant>
    <organismsDiffer>false</organismsDiffer>
    <experiments>3</experiments>
</comment>
<comment type="interaction">
    <interactant intactId="EBI-8643161">
        <id>Q9NX04</id>
    </interactant>
    <interactant intactId="EBI-2824497">
        <id>Q9H019</id>
        <label>MTFR1L</label>
    </interactant>
    <organismsDiffer>false</organismsDiffer>
    <experiments>3</experiments>
</comment>
<comment type="interaction">
    <interactant intactId="EBI-8643161">
        <id>Q9NX04</id>
    </interactant>
    <interactant intactId="EBI-742948">
        <id>Q5JR59</id>
        <label>MTUS2</label>
    </interactant>
    <organismsDiffer>false</organismsDiffer>
    <experiments>3</experiments>
</comment>
<comment type="interaction">
    <interactant intactId="EBI-8643161">
        <id>Q9NX04</id>
    </interactant>
    <interactant intactId="EBI-1246238">
        <id>P17568</id>
        <label>NDUFB7</label>
    </interactant>
    <organismsDiffer>false</organismsDiffer>
    <experiments>3</experiments>
</comment>
<comment type="interaction">
    <interactant intactId="EBI-8643161">
        <id>Q9NX04</id>
    </interactant>
    <interactant intactId="EBI-10172876">
        <id>Q7Z6G3-2</id>
        <label>NECAB2</label>
    </interactant>
    <organismsDiffer>false</organismsDiffer>
    <experiments>6</experiments>
</comment>
<comment type="interaction">
    <interactant intactId="EBI-8643161">
        <id>Q9NX04</id>
    </interactant>
    <interactant intactId="EBI-10271199">
        <id>Q8NI38</id>
        <label>NFKBID</label>
    </interactant>
    <organismsDiffer>false</organismsDiffer>
    <experiments>3</experiments>
</comment>
<comment type="interaction">
    <interactant intactId="EBI-8643161">
        <id>Q9NX04</id>
    </interactant>
    <interactant intactId="EBI-744871">
        <id>O00746</id>
        <label>NME4</label>
    </interactant>
    <organismsDiffer>false</organismsDiffer>
    <experiments>3</experiments>
</comment>
<comment type="interaction">
    <interactant intactId="EBI-8643161">
        <id>Q9NX04</id>
    </interactant>
    <interactant intactId="EBI-741048">
        <id>Q7Z3B4</id>
        <label>NUP54</label>
    </interactant>
    <organismsDiffer>false</organismsDiffer>
    <experiments>5</experiments>
</comment>
<comment type="interaction">
    <interactant intactId="EBI-8643161">
        <id>Q9NX04</id>
    </interactant>
    <interactant intactId="EBI-18583589">
        <id>A6NGQ2</id>
        <label>OOEP</label>
    </interactant>
    <organismsDiffer>false</organismsDiffer>
    <experiments>3</experiments>
</comment>
<comment type="interaction">
    <interactant intactId="EBI-8643161">
        <id>Q9NX04</id>
    </interactant>
    <interactant intactId="EBI-296331">
        <id>Q02548</id>
        <label>PAX5</label>
    </interactant>
    <organismsDiffer>false</organismsDiffer>
    <experiments>3</experiments>
</comment>
<comment type="interaction">
    <interactant intactId="EBI-8643161">
        <id>Q9NX04</id>
    </interactant>
    <interactant intactId="EBI-747278">
        <id>P26367</id>
        <label>PAX6</label>
    </interactant>
    <organismsDiffer>false</organismsDiffer>
    <experiments>3</experiments>
</comment>
<comment type="interaction">
    <interactant intactId="EBI-8643161">
        <id>Q9NX04</id>
    </interactant>
    <interactant intactId="EBI-12859446">
        <id>P23759-2</id>
        <label>PAX7</label>
    </interactant>
    <organismsDiffer>false</organismsDiffer>
    <experiments>3</experiments>
</comment>
<comment type="interaction">
    <interactant intactId="EBI-8643161">
        <id>Q9NX04</id>
    </interactant>
    <interactant intactId="EBI-10302990">
        <id>Q9BYU1</id>
        <label>PBX4</label>
    </interactant>
    <organismsDiffer>false</organismsDiffer>
    <experiments>5</experiments>
</comment>
<comment type="interaction">
    <interactant intactId="EBI-8643161">
        <id>Q9NX04</id>
    </interactant>
    <interactant intactId="EBI-1105124">
        <id>Q5VU43</id>
        <label>PDE4DIP</label>
    </interactant>
    <organismsDiffer>false</organismsDiffer>
    <experiments>3</experiments>
</comment>
<comment type="interaction">
    <interactant intactId="EBI-8643161">
        <id>Q9NX04</id>
    </interactant>
    <interactant intactId="EBI-9640281">
        <id>Q5VU43-2</id>
        <label>PDE4DIP</label>
    </interactant>
    <organismsDiffer>false</organismsDiffer>
    <experiments>3</experiments>
</comment>
<comment type="interaction">
    <interactant intactId="EBI-8643161">
        <id>Q9NX04</id>
    </interactant>
    <interactant intactId="EBI-713786">
        <id>Q8IXK0</id>
        <label>PHC2</label>
    </interactant>
    <organismsDiffer>false</organismsDiffer>
    <experiments>3</experiments>
</comment>
<comment type="interaction">
    <interactant intactId="EBI-8643161">
        <id>Q9NX04</id>
    </interactant>
    <interactant intactId="EBI-746202">
        <id>O00444</id>
        <label>PLK4</label>
    </interactant>
    <organismsDiffer>false</organismsDiffer>
    <experiments>3</experiments>
</comment>
<comment type="interaction">
    <interactant intactId="EBI-8643161">
        <id>Q9NX04</id>
    </interactant>
    <interactant intactId="EBI-302345">
        <id>Q8ND90</id>
        <label>PNMA1</label>
    </interactant>
    <organismsDiffer>false</organismsDiffer>
    <experiments>3</experiments>
</comment>
<comment type="interaction">
    <interactant intactId="EBI-8643161">
        <id>Q9NX04</id>
    </interactant>
    <interactant intactId="EBI-12219503">
        <id>P01189</id>
        <label>POMC</label>
    </interactant>
    <organismsDiffer>false</organismsDiffer>
    <experiments>3</experiments>
</comment>
<comment type="interaction">
    <interactant intactId="EBI-8643161">
        <id>Q9NX04</id>
    </interactant>
    <interactant intactId="EBI-12029004">
        <id>P78424</id>
        <label>POU6F2</label>
    </interactant>
    <organismsDiffer>false</organismsDiffer>
    <experiments>3</experiments>
</comment>
<comment type="interaction">
    <interactant intactId="EBI-8643161">
        <id>Q9NX04</id>
    </interactant>
    <interactant intactId="EBI-721802">
        <id>Q9BZL4</id>
        <label>PPP1R12C</label>
    </interactant>
    <organismsDiffer>false</organismsDiffer>
    <experiments>3</experiments>
</comment>
<comment type="interaction">
    <interactant intactId="EBI-8643161">
        <id>Q9NX04</id>
    </interactant>
    <interactant intactId="EBI-10289057">
        <id>Q9BZL4-5</id>
        <label>PPP1R12C</label>
    </interactant>
    <organismsDiffer>false</organismsDiffer>
    <experiments>3</experiments>
</comment>
<comment type="interaction">
    <interactant intactId="EBI-8643161">
        <id>Q9NX04</id>
    </interactant>
    <interactant intactId="EBI-11320284">
        <id>Q9NQX0</id>
        <label>PRDM6</label>
    </interactant>
    <organismsDiffer>false</organismsDiffer>
    <experiments>3</experiments>
</comment>
<comment type="interaction">
    <interactant intactId="EBI-8643161">
        <id>Q9NX04</id>
    </interactant>
    <interactant intactId="EBI-351098">
        <id>O14744</id>
        <label>PRMT5</label>
    </interactant>
    <organismsDiffer>false</organismsDiffer>
    <experiments>3</experiments>
</comment>
<comment type="interaction">
    <interactant intactId="EBI-8643161">
        <id>Q9NX04</id>
    </interactant>
    <interactant intactId="EBI-603350">
        <id>P28070</id>
        <label>PSMB4</label>
    </interactant>
    <organismsDiffer>false</organismsDiffer>
    <experiments>3</experiments>
</comment>
<comment type="interaction">
    <interactant intactId="EBI-8643161">
        <id>Q9NX04</id>
    </interactant>
    <interactant intactId="EBI-12807240">
        <id>Q08623</id>
        <label>PUDP</label>
    </interactant>
    <organismsDiffer>false</organismsDiffer>
    <experiments>3</experiments>
</comment>
<comment type="interaction">
    <interactant intactId="EBI-8643161">
        <id>Q9NX04</id>
    </interactant>
    <interactant intactId="EBI-307352">
        <id>Q04864</id>
        <label>REL</label>
    </interactant>
    <organismsDiffer>false</organismsDiffer>
    <experiments>3</experiments>
</comment>
<comment type="interaction">
    <interactant intactId="EBI-8643161">
        <id>Q9NX04</id>
    </interactant>
    <interactant intactId="EBI-10829018">
        <id>Q04864-2</id>
        <label>REL</label>
    </interactant>
    <organismsDiffer>false</organismsDiffer>
    <experiments>3</experiments>
</comment>
<comment type="interaction">
    <interactant intactId="EBI-8643161">
        <id>Q9NX04</id>
    </interactant>
    <interactant intactId="EBI-726876">
        <id>Q6NUQ1</id>
        <label>RINT1</label>
    </interactant>
    <organismsDiffer>false</organismsDiffer>
    <experiments>6</experiments>
</comment>
<comment type="interaction">
    <interactant intactId="EBI-8643161">
        <id>Q9NX04</id>
    </interactant>
    <interactant intactId="EBI-2372238">
        <id>Q5VTR2</id>
        <label>RNF20</label>
    </interactant>
    <organismsDiffer>false</organismsDiffer>
    <experiments>3</experiments>
</comment>
<comment type="interaction">
    <interactant intactId="EBI-8643161">
        <id>Q9NX04</id>
    </interactant>
    <interactant intactId="EBI-2130266">
        <id>Q9H4P4</id>
        <label>RNF41</label>
    </interactant>
    <organismsDiffer>false</organismsDiffer>
    <experiments>6</experiments>
</comment>
<comment type="interaction">
    <interactant intactId="EBI-8643161">
        <id>Q9NX04</id>
    </interactant>
    <interactant intactId="EBI-2855824">
        <id>Q9UNE2</id>
        <label>RPH3AL</label>
    </interactant>
    <organismsDiffer>false</organismsDiffer>
    <experiments>3</experiments>
</comment>
<comment type="interaction">
    <interactant intactId="EBI-8643161">
        <id>Q9NX04</id>
    </interactant>
    <interactant intactId="EBI-6257312">
        <id>Q9BVN2</id>
        <label>RUSC1</label>
    </interactant>
    <organismsDiffer>false</organismsDiffer>
    <experiments>5</experiments>
</comment>
<comment type="interaction">
    <interactant intactId="EBI-8643161">
        <id>Q9NX04</id>
    </interactant>
    <interactant intactId="EBI-2561646">
        <id>Q86UD0</id>
        <label>SAPCD2</label>
    </interactant>
    <organismsDiffer>false</organismsDiffer>
    <experiments>5</experiments>
</comment>
<comment type="interaction">
    <interactant intactId="EBI-8643161">
        <id>Q9NX04</id>
    </interactant>
    <interactant intactId="EBI-727004">
        <id>O00560</id>
        <label>SDCBP</label>
    </interactant>
    <organismsDiffer>false</organismsDiffer>
    <experiments>3</experiments>
</comment>
<comment type="interaction">
    <interactant intactId="EBI-8643161">
        <id>Q9NX04</id>
    </interactant>
    <interactant intactId="EBI-748601">
        <id>Q9UHV2</id>
        <label>SERTAD1</label>
    </interactant>
    <organismsDiffer>false</organismsDiffer>
    <experiments>3</experiments>
</comment>
<comment type="interaction">
    <interactant intactId="EBI-8643161">
        <id>Q9NX04</id>
    </interactant>
    <interactant intactId="EBI-2822051">
        <id>Q14140</id>
        <label>SERTAD2</label>
    </interactant>
    <organismsDiffer>false</organismsDiffer>
    <experiments>3</experiments>
</comment>
<comment type="interaction">
    <interactant intactId="EBI-8643161">
        <id>Q9NX04</id>
    </interactant>
    <interactant intactId="EBI-10269374">
        <id>Q8ND83</id>
        <label>SLAIN1</label>
    </interactant>
    <organismsDiffer>false</organismsDiffer>
    <experiments>3</experiments>
</comment>
<comment type="interaction">
    <interactant intactId="EBI-8643161">
        <id>Q9NX04</id>
    </interactant>
    <interactant intactId="EBI-358489">
        <id>Q96GM5</id>
        <label>SMARCD1</label>
    </interactant>
    <organismsDiffer>false</organismsDiffer>
    <experiments>3</experiments>
</comment>
<comment type="interaction">
    <interactant intactId="EBI-8643161">
        <id>Q9NX04</id>
    </interactant>
    <interactant intactId="EBI-3929549">
        <id>O14544</id>
        <label>SOCS6</label>
    </interactant>
    <organismsDiffer>false</organismsDiffer>
    <experiments>3</experiments>
</comment>
<comment type="interaction">
    <interactant intactId="EBI-8643161">
        <id>Q9NX04</id>
    </interactant>
    <interactant intactId="EBI-741237">
        <id>O60504</id>
        <label>SORBS3</label>
    </interactant>
    <organismsDiffer>false</organismsDiffer>
    <experiments>3</experiments>
</comment>
<comment type="interaction">
    <interactant intactId="EBI-8643161">
        <id>Q9NX04</id>
    </interactant>
    <interactant intactId="EBI-413317">
        <id>Q96R06</id>
        <label>SPAG5</label>
    </interactant>
    <organismsDiffer>false</organismsDiffer>
    <experiments>3</experiments>
</comment>
<comment type="interaction">
    <interactant intactId="EBI-8643161">
        <id>Q9NX04</id>
    </interactant>
    <interactant intactId="EBI-10269322">
        <id>Q8NCR6</id>
        <label>SPMIP6</label>
    </interactant>
    <organismsDiffer>false</organismsDiffer>
    <experiments>3</experiments>
</comment>
<comment type="interaction">
    <interactant intactId="EBI-8643161">
        <id>Q9NX04</id>
    </interactant>
    <interactant intactId="EBI-725557">
        <id>Q9NZ72</id>
        <label>STMN3</label>
    </interactant>
    <organismsDiffer>false</organismsDiffer>
    <experiments>3</experiments>
</comment>
<comment type="interaction">
    <interactant intactId="EBI-8643161">
        <id>Q9NX04</id>
    </interactant>
    <interactant intactId="EBI-746930">
        <id>Q9H668</id>
        <label>STN1</label>
    </interactant>
    <organismsDiffer>false</organismsDiffer>
    <experiments>5</experiments>
</comment>
<comment type="interaction">
    <interactant intactId="EBI-8643161">
        <id>Q9NX04</id>
    </interactant>
    <interactant intactId="EBI-714135">
        <id>O75558</id>
        <label>STX11</label>
    </interactant>
    <organismsDiffer>false</organismsDiffer>
    <experiments>6</experiments>
</comment>
<comment type="interaction">
    <interactant intactId="EBI-8643161">
        <id>Q9NX04</id>
    </interactant>
    <interactant intactId="EBI-742268">
        <id>O75478</id>
        <label>TADA2A</label>
    </interactant>
    <organismsDiffer>false</organismsDiffer>
    <experiments>6</experiments>
</comment>
<comment type="interaction">
    <interactant intactId="EBI-8643161">
        <id>Q9NX04</id>
    </interactant>
    <interactant intactId="EBI-745958">
        <id>Q5VWN6</id>
        <label>TASOR2</label>
    </interactant>
    <organismsDiffer>false</organismsDiffer>
    <experiments>4</experiments>
</comment>
<comment type="interaction">
    <interactant intactId="EBI-8643161">
        <id>Q9NX04</id>
    </interactant>
    <interactant intactId="EBI-722877">
        <id>Q99081</id>
        <label>TCF12</label>
    </interactant>
    <organismsDiffer>false</organismsDiffer>
    <experiments>3</experiments>
</comment>
<comment type="interaction">
    <interactant intactId="EBI-8643161">
        <id>Q9NX04</id>
    </interactant>
    <interactant intactId="EBI-533224">
        <id>P15884</id>
        <label>TCF4</label>
    </interactant>
    <organismsDiffer>false</organismsDiffer>
    <experiments>3</experiments>
</comment>
<comment type="interaction">
    <interactant intactId="EBI-8643161">
        <id>Q9NX04</id>
    </interactant>
    <interactant intactId="EBI-750487">
        <id>Q8WW24</id>
        <label>TEKT4</label>
    </interactant>
    <organismsDiffer>false</organismsDiffer>
    <experiments>3</experiments>
</comment>
<comment type="interaction">
    <interactant intactId="EBI-8643161">
        <id>Q9NX04</id>
    </interactant>
    <interactant intactId="EBI-11139477">
        <id>Q96N21</id>
        <label>TEPSIN</label>
    </interactant>
    <organismsDiffer>false</organismsDiffer>
    <experiments>3</experiments>
</comment>
<comment type="interaction">
    <interactant intactId="EBI-8643161">
        <id>Q9NX04</id>
    </interactant>
    <interactant intactId="EBI-1105213">
        <id>Q9UBB9</id>
        <label>TFIP11</label>
    </interactant>
    <organismsDiffer>false</organismsDiffer>
    <experiments>6</experiments>
</comment>
<comment type="interaction">
    <interactant intactId="EBI-8643161">
        <id>Q9NX04</id>
    </interactant>
    <interactant intactId="EBI-717810">
        <id>Q08117</id>
        <label>TLE5</label>
    </interactant>
    <organismsDiffer>false</organismsDiffer>
    <experiments>3</experiments>
</comment>
<comment type="interaction">
    <interactant intactId="EBI-8643161">
        <id>Q9NX04</id>
    </interactant>
    <interactant intactId="EBI-11741437">
        <id>Q08117-2</id>
        <label>TLE5</label>
    </interactant>
    <organismsDiffer>false</organismsDiffer>
    <experiments>3</experiments>
</comment>
<comment type="interaction">
    <interactant intactId="EBI-8643161">
        <id>Q9NX04</id>
    </interactant>
    <interactant intactId="EBI-7746394">
        <id>P48788</id>
        <label>TNNI2</label>
    </interactant>
    <organismsDiffer>false</organismsDiffer>
    <experiments>3</experiments>
</comment>
<comment type="interaction">
    <interactant intactId="EBI-8643161">
        <id>Q9NX04</id>
    </interactant>
    <interactant intactId="EBI-359224">
        <id>Q13077</id>
        <label>TRAF1</label>
    </interactant>
    <organismsDiffer>false</organismsDiffer>
    <experiments>6</experiments>
</comment>
<comment type="interaction">
    <interactant intactId="EBI-8643161">
        <id>Q9NX04</id>
    </interactant>
    <interactant intactId="EBI-5235829">
        <id>Q8IWZ5</id>
        <label>TRIM42</label>
    </interactant>
    <organismsDiffer>false</organismsDiffer>
    <experiments>3</experiments>
</comment>
<comment type="interaction">
    <interactant intactId="EBI-8643161">
        <id>Q9NX04</id>
    </interactant>
    <interactant intactId="EBI-2130429">
        <id>Q9BYV2</id>
        <label>TRIM54</label>
    </interactant>
    <organismsDiffer>false</organismsDiffer>
    <experiments>6</experiments>
</comment>
<comment type="interaction">
    <interactant intactId="EBI-8643161">
        <id>Q9NX04</id>
    </interactant>
    <interactant intactId="EBI-10241197">
        <id>Q3SY00</id>
        <label>TSGA10IP</label>
    </interactant>
    <organismsDiffer>false</organismsDiffer>
    <experiments>3</experiments>
</comment>
<comment type="interaction">
    <interactant intactId="EBI-8643161">
        <id>Q9NX04</id>
    </interactant>
    <interactant intactId="EBI-10274410">
        <id>Q9H892-2</id>
        <label>TTC12</label>
    </interactant>
    <organismsDiffer>false</organismsDiffer>
    <experiments>3</experiments>
</comment>
<comment type="interaction">
    <interactant intactId="EBI-8643161">
        <id>Q9NX04</id>
    </interactant>
    <interactant intactId="EBI-9090990">
        <id>Q5W5X9-3</id>
        <label>TTC23</label>
    </interactant>
    <organismsDiffer>false</organismsDiffer>
    <experiments>3</experiments>
</comment>
<comment type="interaction">
    <interactant intactId="EBI-8643161">
        <id>Q9NX04</id>
    </interactant>
    <interactant intactId="EBI-8656864">
        <id>Q6PF05</id>
        <label>TTC23L</label>
    </interactant>
    <organismsDiffer>false</organismsDiffer>
    <experiments>3</experiments>
</comment>
<comment type="interaction">
    <interactant intactId="EBI-8643161">
        <id>Q9NX04</id>
    </interactant>
    <interactant intactId="EBI-12157345">
        <id>Q8TAS1-2</id>
        <label>UHMK1</label>
    </interactant>
    <organismsDiffer>false</organismsDiffer>
    <experiments>3</experiments>
</comment>
<comment type="interaction">
    <interactant intactId="EBI-8643161">
        <id>Q9NX04</id>
    </interactant>
    <interactant intactId="EBI-8601749">
        <id>Q495M9</id>
        <label>USH1G</label>
    </interactant>
    <organismsDiffer>false</organismsDiffer>
    <experiments>3</experiments>
</comment>
<comment type="interaction">
    <interactant intactId="EBI-8643161">
        <id>Q9NX04</id>
    </interactant>
    <interactant intactId="EBI-739895">
        <id>Q8N6Y0</id>
        <label>USHBP1</label>
    </interactant>
    <organismsDiffer>false</organismsDiffer>
    <experiments>3</experiments>
</comment>
<comment type="interaction">
    <interactant intactId="EBI-8643161">
        <id>Q9NX04</id>
    </interactant>
    <interactant intactId="EBI-357430">
        <id>P61758</id>
        <label>VBP1</label>
    </interactant>
    <organismsDiffer>false</organismsDiffer>
    <experiments>3</experiments>
</comment>
<comment type="interaction">
    <interactant intactId="EBI-8643161">
        <id>Q9NX04</id>
    </interactant>
    <interactant intactId="EBI-11983165">
        <id>Q99990</id>
        <label>VGLL1</label>
    </interactant>
    <organismsDiffer>false</organismsDiffer>
    <experiments>3</experiments>
</comment>
<comment type="interaction">
    <interactant intactId="EBI-8643161">
        <id>Q9NX04</id>
    </interactant>
    <interactant intactId="EBI-2799833">
        <id>Q8N1B4</id>
        <label>VPS52</label>
    </interactant>
    <organismsDiffer>false</organismsDiffer>
    <experiments>6</experiments>
</comment>
<comment type="interaction">
    <interactant intactId="EBI-8643161">
        <id>Q9NX04</id>
    </interactant>
    <interactant intactId="EBI-740037">
        <id>O96006</id>
        <label>ZBED1</label>
    </interactant>
    <organismsDiffer>false</organismsDiffer>
    <experiments>7</experiments>
</comment>
<comment type="interaction">
    <interactant intactId="EBI-8643161">
        <id>Q9NX04</id>
    </interactant>
    <interactant intactId="EBI-12287587">
        <id>B2RXF5</id>
        <label>ZBTB42</label>
    </interactant>
    <organismsDiffer>false</organismsDiffer>
    <experiments>3</experiments>
</comment>
<comment type="interaction">
    <interactant intactId="EBI-8643161">
        <id>Q9NX04</id>
    </interactant>
    <interactant intactId="EBI-7850213">
        <id>Q9UDW3</id>
        <label>ZMAT5</label>
    </interactant>
    <organismsDiffer>false</organismsDiffer>
    <experiments>3</experiments>
</comment>
<comment type="interaction">
    <interactant intactId="EBI-8643161">
        <id>Q9NX04</id>
    </interactant>
    <interactant intactId="EBI-12030590">
        <id>Q9H0C1</id>
        <label>ZMYND12</label>
    </interactant>
    <organismsDiffer>false</organismsDiffer>
    <experiments>3</experiments>
</comment>
<comment type="interaction">
    <interactant intactId="EBI-8643161">
        <id>Q9NX04</id>
    </interactant>
    <interactant intactId="EBI-1105334">
        <id>P17021</id>
        <label>ZNF17</label>
    </interactant>
    <organismsDiffer>false</organismsDiffer>
    <experiments>3</experiments>
</comment>
<comment type="interaction">
    <interactant intactId="EBI-8643161">
        <id>Q9NX04</id>
    </interactant>
    <interactant intactId="EBI-717634">
        <id>P17024</id>
        <label>ZNF20</label>
    </interactant>
    <organismsDiffer>false</organismsDiffer>
    <experiments>3</experiments>
</comment>
<comment type="interaction">
    <interactant intactId="EBI-8643161">
        <id>Q9NX04</id>
    </interactant>
    <interactant intactId="EBI-8643207">
        <id>Q8TD17</id>
        <label>ZNF398</label>
    </interactant>
    <organismsDiffer>false</organismsDiffer>
    <experiments>4</experiments>
</comment>
<comment type="interaction">
    <interactant intactId="EBI-8643161">
        <id>Q9NX04</id>
    </interactant>
    <interactant intactId="EBI-3923307">
        <id>Q8TAQ5</id>
        <label>ZNF420</label>
    </interactant>
    <organismsDiffer>false</organismsDiffer>
    <experiments>3</experiments>
</comment>
<comment type="interaction">
    <interactant intactId="EBI-8643161">
        <id>Q9NX04</id>
    </interactant>
    <interactant intactId="EBI-4395732">
        <id>P0C7X2</id>
        <label>ZNF688</label>
    </interactant>
    <organismsDiffer>false</organismsDiffer>
    <experiments>3</experiments>
</comment>
<comment type="interaction">
    <interactant intactId="EBI-8643161">
        <id>Q9NX04</id>
    </interactant>
    <interactant intactId="EBI-751531">
        <id>O15535</id>
        <label>ZSCAN9</label>
    </interactant>
    <organismsDiffer>false</organismsDiffer>
    <experiments>3</experiments>
</comment>
<comment type="subcellular location">
    <subcellularLocation>
        <location evidence="1">Nucleus</location>
    </subcellularLocation>
    <subcellularLocation>
        <location evidence="1">Cytoplasm</location>
    </subcellularLocation>
</comment>
<comment type="alternative products">
    <event type="alternative splicing"/>
    <isoform>
        <id>Q9NX04-1</id>
        <name>1</name>
        <sequence type="displayed"/>
    </isoform>
    <isoform>
        <id>Q9NX04-2</id>
        <name>2</name>
        <sequence type="described" ref="VSP_022733 VSP_022734"/>
    </isoform>
</comment>
<comment type="PTM">
    <text evidence="1">Phosphorylated on serines by CK2 kinase.</text>
</comment>
<keyword id="KW-0002">3D-structure</keyword>
<keyword id="KW-0025">Alternative splicing</keyword>
<keyword id="KW-0963">Cytoplasm</keyword>
<keyword id="KW-0539">Nucleus</keyword>
<keyword id="KW-0597">Phosphoprotein</keyword>
<keyword id="KW-1267">Proteomics identification</keyword>
<keyword id="KW-1185">Reference proteome</keyword>
<keyword id="KW-0690">Ribosome biogenesis</keyword>
<protein>
    <recommendedName>
        <fullName evidence="7">AFG2-interacting ribosome maturation factor</fullName>
    </recommendedName>
    <alternativeName>
        <fullName evidence="6">Ribosome biogenesis protein C1orf109</fullName>
    </alternativeName>
</protein>
<feature type="chain" id="PRO_0000274382" description="AFG2-interacting ribosome maturation factor">
    <location>
        <begin position="1"/>
        <end position="203"/>
    </location>
</feature>
<feature type="splice variant" id="VSP_022733" description="In isoform 2." evidence="4">
    <original>RKQLVAGDIVLDKLGERLAILLKVRDMVSSHVERVFQIY</original>
    <variation>QPSSSRCETWSAAMWSECFRSMSNTQTQLALMLSCSLQQ</variation>
    <location>
        <begin position="75"/>
        <end position="113"/>
    </location>
</feature>
<feature type="splice variant" id="VSP_022734" description="In isoform 2." evidence="4">
    <location>
        <begin position="114"/>
        <end position="203"/>
    </location>
</feature>
<feature type="mutagenesis site" description="Loss of interaction with CINP. No effect on interaction with interaction with AFG2A and AFG2B." evidence="3">
    <original>L</original>
    <variation>R</variation>
    <location>
        <position position="63"/>
    </location>
</feature>
<feature type="mutagenesis site" description="Loss of interaction with CINP. No effect on interaction with interaction with AFG2A and AFG2B." evidence="3">
    <original>L</original>
    <variation>R</variation>
    <location>
        <position position="69"/>
    </location>
</feature>
<feature type="mutagenesis site" description="Loss of interaction with CINP. No effect on interaction with interaction with AFG2A and AFG2B." evidence="3">
    <original>L</original>
    <variation>A</variation>
    <location>
        <position position="73"/>
    </location>
</feature>
<feature type="mutagenesis site" description="Abolishes phosphorylation by CK2 kinase; when associated with A-134 and A-182." evidence="1">
    <original>S</original>
    <variation>A</variation>
    <location>
        <position position="104"/>
    </location>
</feature>
<feature type="mutagenesis site" description="Abolishes phosphorylation by CK2 kinase; when associated with A-104 and A-182." evidence="1">
    <original>S</original>
    <variation>A</variation>
    <location>
        <position position="134"/>
    </location>
</feature>
<feature type="mutagenesis site" description="Abolishes phosphorylation by CK2 kinase; when associated with A-104 and A-134." evidence="1">
    <original>S</original>
    <variation>A</variation>
    <location>
        <position position="182"/>
    </location>
</feature>
<evidence type="ECO:0000269" key="1">
    <source>
    </source>
</evidence>
<evidence type="ECO:0000269" key="2">
    <source>
    </source>
</evidence>
<evidence type="ECO:0000269" key="3">
    <source>
    </source>
</evidence>
<evidence type="ECO:0000303" key="4">
    <source>
    </source>
</evidence>
<evidence type="ECO:0000303" key="5">
    <source>
    </source>
</evidence>
<evidence type="ECO:0000305" key="6"/>
<evidence type="ECO:0000312" key="7">
    <source>
        <dbReference type="HGNC" id="HGNC:26039"/>
    </source>
</evidence>
<gene>
    <name evidence="7" type="primary">AIRIM</name>
    <name evidence="5" type="synonym">C1orf109</name>
</gene>
<accession>Q9NX04</accession>
<accession>D3DPT1</accession>
<accession>Q8WVD1</accession>
<proteinExistence type="evidence at protein level"/>
<name>AIRIM_HUMAN</name>
<sequence>MTQDRPLLAVQEALKKCFPVVEEQQGLWQSALRDCQPLLSSLSNLAEQLQAAQNLRFEDVPALRAFPDLKERLRRKQLVAGDIVLDKLGERLAILLKVRDMVSSHVERVFQIYEQHADTVGIDAVLQPSAVSPSVADMLEWLQDIERHYRKSYLKRKYLLSSIQWGDLANIQALPKAWDRISKDEHQDLVQDILLNVSFFLEE</sequence>